<protein>
    <recommendedName>
        <fullName>Protein transport protein SEC13</fullName>
    </recommendedName>
</protein>
<organism>
    <name type="scientific">Chaetomium globosum (strain ATCC 6205 / CBS 148.51 / DSM 1962 / NBRC 6347 / NRRL 1970)</name>
    <name type="common">Soil fungus</name>
    <dbReference type="NCBI Taxonomy" id="306901"/>
    <lineage>
        <taxon>Eukaryota</taxon>
        <taxon>Fungi</taxon>
        <taxon>Dikarya</taxon>
        <taxon>Ascomycota</taxon>
        <taxon>Pezizomycotina</taxon>
        <taxon>Sordariomycetes</taxon>
        <taxon>Sordariomycetidae</taxon>
        <taxon>Sordariales</taxon>
        <taxon>Chaetomiaceae</taxon>
        <taxon>Chaetomium</taxon>
    </lineage>
</organism>
<dbReference type="EMBL" id="CH408034">
    <property type="protein sequence ID" value="EAQ85014.1"/>
    <property type="molecule type" value="Genomic_DNA"/>
</dbReference>
<dbReference type="RefSeq" id="XP_001226955.1">
    <property type="nucleotide sequence ID" value="XM_001226954.1"/>
</dbReference>
<dbReference type="SMR" id="Q2GSM6"/>
<dbReference type="FunCoup" id="Q2GSM6">
    <property type="interactions" value="951"/>
</dbReference>
<dbReference type="STRING" id="306901.Q2GSM6"/>
<dbReference type="GeneID" id="4394871"/>
<dbReference type="VEuPathDB" id="FungiDB:CHGG_09028"/>
<dbReference type="eggNOG" id="KOG1332">
    <property type="taxonomic scope" value="Eukaryota"/>
</dbReference>
<dbReference type="HOGENOM" id="CLU_032441_0_1_1"/>
<dbReference type="InParanoid" id="Q2GSM6"/>
<dbReference type="OMA" id="IWKEEGD"/>
<dbReference type="OrthoDB" id="364224at2759"/>
<dbReference type="Proteomes" id="UP000001056">
    <property type="component" value="Unassembled WGS sequence"/>
</dbReference>
<dbReference type="GO" id="GO:0030127">
    <property type="term" value="C:COPII vesicle coat"/>
    <property type="evidence" value="ECO:0007669"/>
    <property type="project" value="EnsemblFungi"/>
</dbReference>
<dbReference type="GO" id="GO:0005789">
    <property type="term" value="C:endoplasmic reticulum membrane"/>
    <property type="evidence" value="ECO:0007669"/>
    <property type="project" value="UniProtKB-SubCell"/>
</dbReference>
<dbReference type="GO" id="GO:0061700">
    <property type="term" value="C:GATOR2 complex"/>
    <property type="evidence" value="ECO:0007669"/>
    <property type="project" value="EnsemblFungi"/>
</dbReference>
<dbReference type="GO" id="GO:0031080">
    <property type="term" value="C:nuclear pore outer ring"/>
    <property type="evidence" value="ECO:0007669"/>
    <property type="project" value="EnsemblFungi"/>
</dbReference>
<dbReference type="GO" id="GO:0005198">
    <property type="term" value="F:structural molecule activity"/>
    <property type="evidence" value="ECO:0007669"/>
    <property type="project" value="EnsemblFungi"/>
</dbReference>
<dbReference type="GO" id="GO:0090114">
    <property type="term" value="P:COPII-coated vesicle budding"/>
    <property type="evidence" value="ECO:0007669"/>
    <property type="project" value="EnsemblFungi"/>
</dbReference>
<dbReference type="GO" id="GO:0036503">
    <property type="term" value="P:ERAD pathway"/>
    <property type="evidence" value="ECO:0007669"/>
    <property type="project" value="EnsemblFungi"/>
</dbReference>
<dbReference type="GO" id="GO:0051028">
    <property type="term" value="P:mRNA transport"/>
    <property type="evidence" value="ECO:0007669"/>
    <property type="project" value="UniProtKB-KW"/>
</dbReference>
<dbReference type="GO" id="GO:0051664">
    <property type="term" value="P:nuclear pore localization"/>
    <property type="evidence" value="ECO:0007669"/>
    <property type="project" value="EnsemblFungi"/>
</dbReference>
<dbReference type="GO" id="GO:0045893">
    <property type="term" value="P:positive regulation of DNA-templated transcription"/>
    <property type="evidence" value="ECO:0007669"/>
    <property type="project" value="EnsemblFungi"/>
</dbReference>
<dbReference type="GO" id="GO:1902953">
    <property type="term" value="P:positive regulation of ER to Golgi vesicle-mediated transport"/>
    <property type="evidence" value="ECO:0007669"/>
    <property type="project" value="EnsemblFungi"/>
</dbReference>
<dbReference type="GO" id="GO:0070863">
    <property type="term" value="P:positive regulation of protein exit from endoplasmic reticulum"/>
    <property type="evidence" value="ECO:0007669"/>
    <property type="project" value="EnsemblFungi"/>
</dbReference>
<dbReference type="GO" id="GO:1904263">
    <property type="term" value="P:positive regulation of TORC1 signaling"/>
    <property type="evidence" value="ECO:0007669"/>
    <property type="project" value="EnsemblFungi"/>
</dbReference>
<dbReference type="GO" id="GO:0032527">
    <property type="term" value="P:protein exit from endoplasmic reticulum"/>
    <property type="evidence" value="ECO:0007669"/>
    <property type="project" value="TreeGrafter"/>
</dbReference>
<dbReference type="GO" id="GO:0006606">
    <property type="term" value="P:protein import into nucleus"/>
    <property type="evidence" value="ECO:0007669"/>
    <property type="project" value="TreeGrafter"/>
</dbReference>
<dbReference type="FunFam" id="2.130.10.10:FF:000017">
    <property type="entry name" value="SEC13 homolog (S. cerevisiae)"/>
    <property type="match status" value="1"/>
</dbReference>
<dbReference type="Gene3D" id="2.130.10.10">
    <property type="entry name" value="YVTN repeat-like/Quinoprotein amine dehydrogenase"/>
    <property type="match status" value="1"/>
</dbReference>
<dbReference type="InterPro" id="IPR020472">
    <property type="entry name" value="G-protein_beta_WD-40_rep"/>
</dbReference>
<dbReference type="InterPro" id="IPR037363">
    <property type="entry name" value="Sec13/Seh1_fam"/>
</dbReference>
<dbReference type="InterPro" id="IPR015943">
    <property type="entry name" value="WD40/YVTN_repeat-like_dom_sf"/>
</dbReference>
<dbReference type="InterPro" id="IPR036322">
    <property type="entry name" value="WD40_repeat_dom_sf"/>
</dbReference>
<dbReference type="InterPro" id="IPR001680">
    <property type="entry name" value="WD40_rpt"/>
</dbReference>
<dbReference type="PANTHER" id="PTHR11024">
    <property type="entry name" value="NUCLEAR PORE COMPLEX PROTEIN SEC13 / SEH1 FAMILY MEMBER"/>
    <property type="match status" value="1"/>
</dbReference>
<dbReference type="PANTHER" id="PTHR11024:SF2">
    <property type="entry name" value="PROTEIN SEC13 HOMOLOG"/>
    <property type="match status" value="1"/>
</dbReference>
<dbReference type="Pfam" id="PF00400">
    <property type="entry name" value="WD40"/>
    <property type="match status" value="5"/>
</dbReference>
<dbReference type="PRINTS" id="PR00320">
    <property type="entry name" value="GPROTEINBRPT"/>
</dbReference>
<dbReference type="SMART" id="SM00320">
    <property type="entry name" value="WD40"/>
    <property type="match status" value="5"/>
</dbReference>
<dbReference type="SUPFAM" id="SSF50978">
    <property type="entry name" value="WD40 repeat-like"/>
    <property type="match status" value="1"/>
</dbReference>
<dbReference type="PROSITE" id="PS50082">
    <property type="entry name" value="WD_REPEATS_2"/>
    <property type="match status" value="3"/>
</dbReference>
<dbReference type="PROSITE" id="PS50294">
    <property type="entry name" value="WD_REPEATS_REGION"/>
    <property type="match status" value="1"/>
</dbReference>
<accession>Q2GSM6</accession>
<comment type="function">
    <text evidence="2">Component of the coat protein complex II (COPII) which promotes the formation of transport vesicles from the endoplasmic reticulum (ER). The coat has two main functions, the physical deformation of the endoplasmic reticulum membrane into vesicles and the selection of cargo molecules. It also functions as a component of the nuclear pore complex (NPC). NPC components, collectively referred to as nucleoporins (NUPs), can play the role of both NPC structural components and of docking or interaction partners for transiently associated nuclear transport factors. SEC13 is required for efficient mRNA export from the nucleus to the cytoplasm and for correct nuclear pore biogenesis and distribution (By similarity).</text>
</comment>
<comment type="subunit">
    <text evidence="2">The COPII coat is composed of at least 5 proteins: the SEC23/24 complex, the SEC13/31 complex, and the protein SAR1. Component of the nuclear pore complex (NPC). NPC constitutes the exclusive means of nucleocytoplasmic transport. NPCs allow the passive diffusion of ions and small molecules and the active, nuclear transport receptor-mediated bidirectional transport of macromolecules such as proteins, RNAs, ribonucleoparticles (RNPs), and ribosomal subunits across the nuclear envelope. Due to its 8-fold rotational symmetry, all subunits are present with 8 copies or multiples thereof.</text>
</comment>
<comment type="subcellular location">
    <subcellularLocation>
        <location evidence="1">Cytoplasmic vesicle</location>
        <location evidence="1">COPII-coated vesicle membrane</location>
        <topology evidence="1">Peripheral membrane protein</topology>
        <orientation evidence="1">Cytoplasmic side</orientation>
    </subcellularLocation>
    <subcellularLocation>
        <location evidence="1">Endoplasmic reticulum membrane</location>
        <topology evidence="1">Peripheral membrane protein</topology>
        <orientation evidence="1">Cytoplasmic side</orientation>
    </subcellularLocation>
    <subcellularLocation>
        <location evidence="2">Nucleus</location>
        <location evidence="2">Nuclear pore complex</location>
    </subcellularLocation>
</comment>
<comment type="similarity">
    <text evidence="3">Belongs to the WD repeat SEC13 family.</text>
</comment>
<keyword id="KW-0968">Cytoplasmic vesicle</keyword>
<keyword id="KW-0256">Endoplasmic reticulum</keyword>
<keyword id="KW-0931">ER-Golgi transport</keyword>
<keyword id="KW-0472">Membrane</keyword>
<keyword id="KW-0509">mRNA transport</keyword>
<keyword id="KW-0906">Nuclear pore complex</keyword>
<keyword id="KW-0539">Nucleus</keyword>
<keyword id="KW-0653">Protein transport</keyword>
<keyword id="KW-1185">Reference proteome</keyword>
<keyword id="KW-0677">Repeat</keyword>
<keyword id="KW-0811">Translocation</keyword>
<keyword id="KW-0813">Transport</keyword>
<keyword id="KW-0853">WD repeat</keyword>
<proteinExistence type="inferred from homology"/>
<name>SEC13_CHAGB</name>
<feature type="chain" id="PRO_0000295411" description="Protein transport protein SEC13">
    <location>
        <begin position="1"/>
        <end position="290"/>
    </location>
</feature>
<feature type="repeat" description="WD 1">
    <location>
        <begin position="1"/>
        <end position="36"/>
    </location>
</feature>
<feature type="repeat" description="WD 2">
    <location>
        <begin position="41"/>
        <end position="82"/>
    </location>
</feature>
<feature type="repeat" description="WD 3">
    <location>
        <begin position="87"/>
        <end position="128"/>
    </location>
</feature>
<feature type="repeat" description="WD 4">
    <location>
        <begin position="133"/>
        <end position="189"/>
    </location>
</feature>
<feature type="repeat" description="WD 5">
    <location>
        <begin position="197"/>
        <end position="239"/>
    </location>
</feature>
<feature type="repeat" description="WD 6">
    <location>
        <begin position="245"/>
        <end position="284"/>
    </location>
</feature>
<reference key="1">
    <citation type="journal article" date="2015" name="Genome Announc.">
        <title>Draft genome sequence of the cellulolytic fungus Chaetomium globosum.</title>
        <authorList>
            <person name="Cuomo C.A."/>
            <person name="Untereiner W.A."/>
            <person name="Ma L.-J."/>
            <person name="Grabherr M."/>
            <person name="Birren B.W."/>
        </authorList>
    </citation>
    <scope>NUCLEOTIDE SEQUENCE [LARGE SCALE GENOMIC DNA]</scope>
    <source>
        <strain>ATCC 6205 / CBS 148.51 / DSM 1962 / NBRC 6347 / NRRL 1970</strain>
    </source>
</reference>
<sequence length="290" mass="32042">MIHDAVLDYYGRRLATCSSDRTIKIFEIEGETQRLTETLKGHDGAVWCVSWAHPKYGNILASAGYDGKVLIWREQNGAWQRIYDFSLHKASVNVVSWSPHEAGCVLACASSDGNVSVLEFKDNNSWEHSIFHAHGLGVNSVSWAPATNPGSIVSSKPSPKSTGNRRFVTGGSDNALKIWAFDAATGAYKLEREPLTGHTDWVRDVAWSPTVLQKSYIASASEDRTVRIWTSDPANPQQWNCKVLGFDAAVWRVSWSLSGNVLAASGGDNKVTLWKENLKGEWECVKSIEE</sequence>
<gene>
    <name type="primary">SEC13</name>
    <name type="ORF">CHGG_09028</name>
</gene>
<evidence type="ECO:0000250" key="1"/>
<evidence type="ECO:0000250" key="2">
    <source>
        <dbReference type="UniProtKB" id="Q04491"/>
    </source>
</evidence>
<evidence type="ECO:0000305" key="3"/>